<protein>
    <recommendedName>
        <fullName>Uncharacterized RING finger protein C548.05c</fullName>
    </recommendedName>
</protein>
<evidence type="ECO:0000255" key="1">
    <source>
        <dbReference type="PROSITE-ProRule" id="PRU00175"/>
    </source>
</evidence>
<evidence type="ECO:0000256" key="2">
    <source>
        <dbReference type="SAM" id="MobiDB-lite"/>
    </source>
</evidence>
<evidence type="ECO:0000269" key="3">
    <source>
    </source>
</evidence>
<organism>
    <name type="scientific">Schizosaccharomyces pombe (strain 972 / ATCC 24843)</name>
    <name type="common">Fission yeast</name>
    <dbReference type="NCBI Taxonomy" id="284812"/>
    <lineage>
        <taxon>Eukaryota</taxon>
        <taxon>Fungi</taxon>
        <taxon>Dikarya</taxon>
        <taxon>Ascomycota</taxon>
        <taxon>Taphrinomycotina</taxon>
        <taxon>Schizosaccharomycetes</taxon>
        <taxon>Schizosaccharomycetales</taxon>
        <taxon>Schizosaccharomycetaceae</taxon>
        <taxon>Schizosaccharomyces</taxon>
    </lineage>
</organism>
<gene>
    <name type="ORF">SPCC548.05c</name>
</gene>
<reference key="1">
    <citation type="journal article" date="2002" name="Nature">
        <title>The genome sequence of Schizosaccharomyces pombe.</title>
        <authorList>
            <person name="Wood V."/>
            <person name="Gwilliam R."/>
            <person name="Rajandream M.A."/>
            <person name="Lyne M.H."/>
            <person name="Lyne R."/>
            <person name="Stewart A."/>
            <person name="Sgouros J.G."/>
            <person name="Peat N."/>
            <person name="Hayles J."/>
            <person name="Baker S.G."/>
            <person name="Basham D."/>
            <person name="Bowman S."/>
            <person name="Brooks K."/>
            <person name="Brown D."/>
            <person name="Brown S."/>
            <person name="Chillingworth T."/>
            <person name="Churcher C.M."/>
            <person name="Collins M."/>
            <person name="Connor R."/>
            <person name="Cronin A."/>
            <person name="Davis P."/>
            <person name="Feltwell T."/>
            <person name="Fraser A."/>
            <person name="Gentles S."/>
            <person name="Goble A."/>
            <person name="Hamlin N."/>
            <person name="Harris D.E."/>
            <person name="Hidalgo J."/>
            <person name="Hodgson G."/>
            <person name="Holroyd S."/>
            <person name="Hornsby T."/>
            <person name="Howarth S."/>
            <person name="Huckle E.J."/>
            <person name="Hunt S."/>
            <person name="Jagels K."/>
            <person name="James K.D."/>
            <person name="Jones L."/>
            <person name="Jones M."/>
            <person name="Leather S."/>
            <person name="McDonald S."/>
            <person name="McLean J."/>
            <person name="Mooney P."/>
            <person name="Moule S."/>
            <person name="Mungall K.L."/>
            <person name="Murphy L.D."/>
            <person name="Niblett D."/>
            <person name="Odell C."/>
            <person name="Oliver K."/>
            <person name="O'Neil S."/>
            <person name="Pearson D."/>
            <person name="Quail M.A."/>
            <person name="Rabbinowitsch E."/>
            <person name="Rutherford K.M."/>
            <person name="Rutter S."/>
            <person name="Saunders D."/>
            <person name="Seeger K."/>
            <person name="Sharp S."/>
            <person name="Skelton J."/>
            <person name="Simmonds M.N."/>
            <person name="Squares R."/>
            <person name="Squares S."/>
            <person name="Stevens K."/>
            <person name="Taylor K."/>
            <person name="Taylor R.G."/>
            <person name="Tivey A."/>
            <person name="Walsh S.V."/>
            <person name="Warren T."/>
            <person name="Whitehead S."/>
            <person name="Woodward J.R."/>
            <person name="Volckaert G."/>
            <person name="Aert R."/>
            <person name="Robben J."/>
            <person name="Grymonprez B."/>
            <person name="Weltjens I."/>
            <person name="Vanstreels E."/>
            <person name="Rieger M."/>
            <person name="Schaefer M."/>
            <person name="Mueller-Auer S."/>
            <person name="Gabel C."/>
            <person name="Fuchs M."/>
            <person name="Duesterhoeft A."/>
            <person name="Fritzc C."/>
            <person name="Holzer E."/>
            <person name="Moestl D."/>
            <person name="Hilbert H."/>
            <person name="Borzym K."/>
            <person name="Langer I."/>
            <person name="Beck A."/>
            <person name="Lehrach H."/>
            <person name="Reinhardt R."/>
            <person name="Pohl T.M."/>
            <person name="Eger P."/>
            <person name="Zimmermann W."/>
            <person name="Wedler H."/>
            <person name="Wambutt R."/>
            <person name="Purnelle B."/>
            <person name="Goffeau A."/>
            <person name="Cadieu E."/>
            <person name="Dreano S."/>
            <person name="Gloux S."/>
            <person name="Lelaure V."/>
            <person name="Mottier S."/>
            <person name="Galibert F."/>
            <person name="Aves S.J."/>
            <person name="Xiang Z."/>
            <person name="Hunt C."/>
            <person name="Moore K."/>
            <person name="Hurst S.M."/>
            <person name="Lucas M."/>
            <person name="Rochet M."/>
            <person name="Gaillardin C."/>
            <person name="Tallada V.A."/>
            <person name="Garzon A."/>
            <person name="Thode G."/>
            <person name="Daga R.R."/>
            <person name="Cruzado L."/>
            <person name="Jimenez J."/>
            <person name="Sanchez M."/>
            <person name="del Rey F."/>
            <person name="Benito J."/>
            <person name="Dominguez A."/>
            <person name="Revuelta J.L."/>
            <person name="Moreno S."/>
            <person name="Armstrong J."/>
            <person name="Forsburg S.L."/>
            <person name="Cerutti L."/>
            <person name="Lowe T."/>
            <person name="McCombie W.R."/>
            <person name="Paulsen I."/>
            <person name="Potashkin J."/>
            <person name="Shpakovski G.V."/>
            <person name="Ussery D."/>
            <person name="Barrell B.G."/>
            <person name="Nurse P."/>
        </authorList>
    </citation>
    <scope>NUCLEOTIDE SEQUENCE [LARGE SCALE GENOMIC DNA]</scope>
    <source>
        <strain>972 / ATCC 24843</strain>
    </source>
</reference>
<reference key="2">
    <citation type="journal article" date="2006" name="Nat. Biotechnol.">
        <title>ORFeome cloning and global analysis of protein localization in the fission yeast Schizosaccharomyces pombe.</title>
        <authorList>
            <person name="Matsuyama A."/>
            <person name="Arai R."/>
            <person name="Yashiroda Y."/>
            <person name="Shirai A."/>
            <person name="Kamata A."/>
            <person name="Sekido S."/>
            <person name="Kobayashi Y."/>
            <person name="Hashimoto A."/>
            <person name="Hamamoto M."/>
            <person name="Hiraoka Y."/>
            <person name="Horinouchi S."/>
            <person name="Yoshida M."/>
        </authorList>
    </citation>
    <scope>SUBCELLULAR LOCATION [LARGE SCALE ANALYSIS]</scope>
</reference>
<keyword id="KW-0479">Metal-binding</keyword>
<keyword id="KW-0539">Nucleus</keyword>
<keyword id="KW-1185">Reference proteome</keyword>
<keyword id="KW-0862">Zinc</keyword>
<keyword id="KW-0863">Zinc-finger</keyword>
<sequence>MVKRSSHRQVVLDEDDEENYNNNLDDEKMEVLLIPQSNSTTFASSDATQMYKKSRISSNSENKKQIPDTKTLLETFQKIKKTLECPICTEALQRPFTTHCGHTYCYECLLNWLKESKSCPTCRQKLYTQPSPAYLVYEIMNVVAASNSGFPLVGINENPAKKQKEVLFDGMFKQEDSHYPRSILVDSEDGVLRCARCQWELENPYHCDHCGFQISDDQDSGREWFWDGENAESDSSLNGDNTRGGNISTNRAFNNMGHAPITAVPQDWLRFDEGEEFVGSDLESDFSGPGEYDVDDGFIDNRATSQLSPVESDDDFVAPVNGSNGNGITALDSTDSEEIDIMNGFDEERDSGGTNMVSRSETCYNDGQRYDELRRELADIQNESLDSLNSSSNNSPSHNNIHSRQHPFSSDEDEGNIVTNGTGLRSSQSSSQNRGFDLEPYSEVFTASYPRRQARRTRTIQLDSDEES</sequence>
<name>YJ95_SCHPO</name>
<dbReference type="EMBL" id="CU329672">
    <property type="protein sequence ID" value="CAB94947.1"/>
    <property type="molecule type" value="Genomic_DNA"/>
</dbReference>
<dbReference type="SMR" id="Q9P3U8"/>
<dbReference type="BioGRID" id="275880">
    <property type="interactions" value="22"/>
</dbReference>
<dbReference type="IntAct" id="Q9P3U8">
    <property type="interactions" value="1"/>
</dbReference>
<dbReference type="STRING" id="284812.Q9P3U8"/>
<dbReference type="iPTMnet" id="Q9P3U8"/>
<dbReference type="PaxDb" id="4896-SPCC548.05c.1"/>
<dbReference type="EnsemblFungi" id="SPCC548.05c.1">
    <property type="protein sequence ID" value="SPCC548.05c.1:pep"/>
    <property type="gene ID" value="SPCC548.05c"/>
</dbReference>
<dbReference type="KEGG" id="spo:2539314"/>
<dbReference type="PomBase" id="SPCC548.05c"/>
<dbReference type="VEuPathDB" id="FungiDB:SPCC548.05c"/>
<dbReference type="eggNOG" id="KOG2177">
    <property type="taxonomic scope" value="Eukaryota"/>
</dbReference>
<dbReference type="HOGENOM" id="CLU_605753_0_0_1"/>
<dbReference type="InParanoid" id="Q9P3U8"/>
<dbReference type="PRO" id="PR:Q9P3U8"/>
<dbReference type="Proteomes" id="UP000002485">
    <property type="component" value="Chromosome III"/>
</dbReference>
<dbReference type="GO" id="GO:0044732">
    <property type="term" value="C:mitotic spindle pole body"/>
    <property type="evidence" value="ECO:0007005"/>
    <property type="project" value="PomBase"/>
</dbReference>
<dbReference type="GO" id="GO:0005634">
    <property type="term" value="C:nucleus"/>
    <property type="evidence" value="ECO:0007005"/>
    <property type="project" value="PomBase"/>
</dbReference>
<dbReference type="GO" id="GO:0035861">
    <property type="term" value="C:site of double-strand break"/>
    <property type="evidence" value="ECO:0000314"/>
    <property type="project" value="PomBase"/>
</dbReference>
<dbReference type="GO" id="GO:0061630">
    <property type="term" value="F:ubiquitin protein ligase activity"/>
    <property type="evidence" value="ECO:0000318"/>
    <property type="project" value="GO_Central"/>
</dbReference>
<dbReference type="GO" id="GO:0008270">
    <property type="term" value="F:zinc ion binding"/>
    <property type="evidence" value="ECO:0000255"/>
    <property type="project" value="PomBase"/>
</dbReference>
<dbReference type="GO" id="GO:0043161">
    <property type="term" value="P:proteasome-mediated ubiquitin-dependent protein catabolic process"/>
    <property type="evidence" value="ECO:0000318"/>
    <property type="project" value="GO_Central"/>
</dbReference>
<dbReference type="CDD" id="cd16568">
    <property type="entry name" value="RING-HC_ScPSH1-like"/>
    <property type="match status" value="1"/>
</dbReference>
<dbReference type="FunFam" id="3.30.40.10:FF:001456">
    <property type="entry name" value="Uncharacterized RING finger protein C548.05c"/>
    <property type="match status" value="1"/>
</dbReference>
<dbReference type="Gene3D" id="3.30.40.10">
    <property type="entry name" value="Zinc/RING finger domain, C3HC4 (zinc finger)"/>
    <property type="match status" value="1"/>
</dbReference>
<dbReference type="InterPro" id="IPR001841">
    <property type="entry name" value="Znf_RING"/>
</dbReference>
<dbReference type="InterPro" id="IPR013083">
    <property type="entry name" value="Znf_RING/FYVE/PHD"/>
</dbReference>
<dbReference type="InterPro" id="IPR017907">
    <property type="entry name" value="Znf_RING_CS"/>
</dbReference>
<dbReference type="PANTHER" id="PTHR23327">
    <property type="entry name" value="RING FINGER PROTEIN 127"/>
    <property type="match status" value="1"/>
</dbReference>
<dbReference type="Pfam" id="PF13923">
    <property type="entry name" value="zf-C3HC4_2"/>
    <property type="match status" value="1"/>
</dbReference>
<dbReference type="SMART" id="SM00184">
    <property type="entry name" value="RING"/>
    <property type="match status" value="1"/>
</dbReference>
<dbReference type="SUPFAM" id="SSF57850">
    <property type="entry name" value="RING/U-box"/>
    <property type="match status" value="1"/>
</dbReference>
<dbReference type="PROSITE" id="PS00518">
    <property type="entry name" value="ZF_RING_1"/>
    <property type="match status" value="1"/>
</dbReference>
<dbReference type="PROSITE" id="PS50089">
    <property type="entry name" value="ZF_RING_2"/>
    <property type="match status" value="1"/>
</dbReference>
<feature type="chain" id="PRO_0000310486" description="Uncharacterized RING finger protein C548.05c">
    <location>
        <begin position="1"/>
        <end position="468"/>
    </location>
</feature>
<feature type="zinc finger region" description="RING-type" evidence="1">
    <location>
        <begin position="85"/>
        <end position="123"/>
    </location>
</feature>
<feature type="region of interest" description="Disordered" evidence="2">
    <location>
        <begin position="1"/>
        <end position="22"/>
    </location>
</feature>
<feature type="region of interest" description="Disordered" evidence="2">
    <location>
        <begin position="386"/>
        <end position="468"/>
    </location>
</feature>
<feature type="compositionally biased region" description="Low complexity" evidence="2">
    <location>
        <begin position="386"/>
        <end position="402"/>
    </location>
</feature>
<feature type="compositionally biased region" description="Polar residues" evidence="2">
    <location>
        <begin position="417"/>
        <end position="434"/>
    </location>
</feature>
<comment type="subcellular location">
    <subcellularLocation>
        <location evidence="3">Nucleus</location>
    </subcellularLocation>
</comment>
<accession>Q9P3U8</accession>
<proteinExistence type="predicted"/>